<comment type="function">
    <text evidence="1">Inhibits the transcriptional activation activity of the cone-rod homeobox CRX (By similarity). May participate in the regulation of visual phototransduction or in the integration of photoreceptor metabolism.</text>
</comment>
<comment type="subunit">
    <text evidence="1">Interacts with CRX (By similarity). Forms a complex with the beta and gamma subunits of the GTP-binding protein, transducin.</text>
</comment>
<comment type="subcellular location">
    <subcellularLocation>
        <location evidence="3">Cytoplasm</location>
        <location evidence="3">Cytosol</location>
    </subcellularLocation>
    <subcellularLocation>
        <location evidence="3">Nucleus</location>
    </subcellularLocation>
    <subcellularLocation>
        <location evidence="2">Cell projection</location>
        <location evidence="2">Cilium</location>
        <location evidence="2">Photoreceptor outer segment</location>
    </subcellularLocation>
    <subcellularLocation>
        <location evidence="2">Photoreceptor inner segment</location>
    </subcellularLocation>
</comment>
<comment type="PTM">
    <text>Light-induced changes in cyclic nucleotide levels modulate the phosphorylation of this protein by cAMP kinase.</text>
</comment>
<comment type="similarity">
    <text evidence="6">Belongs to the phosducin family.</text>
</comment>
<reference key="1">
    <citation type="journal article" date="1990" name="Gene">
        <title>Analysis of the human, bovine and rat 33-kDa proteins and cDNA in retina and pineal gland.</title>
        <authorList>
            <person name="Abe T."/>
            <person name="Nakabayashi H."/>
            <person name="Tamada H."/>
            <person name="Takagi T."/>
            <person name="Sakuragi S."/>
            <person name="Yamaki K."/>
            <person name="Shinohara T."/>
        </authorList>
    </citation>
    <scope>NUCLEOTIDE SEQUENCE [MRNA]</scope>
    <source>
        <strain>Sprague-Dawley</strain>
        <tissue>Pineal gland</tissue>
        <tissue>Retina</tissue>
    </source>
</reference>
<reference key="2">
    <citation type="journal article" date="1991" name="Genomics">
        <title>Rat pineal gland phosducin: cDNA isolation, nucleotide sequence, and chromosomal assignment in the mouse.</title>
        <authorList>
            <person name="Craft C.M."/>
            <person name="Lolley R.N."/>
            <person name="Seldin M.F."/>
            <person name="Lee R.H."/>
        </authorList>
    </citation>
    <scope>NUCLEOTIDE SEQUENCE [MRNA]</scope>
    <source>
        <tissue>Pineal gland</tissue>
    </source>
</reference>
<reference key="3">
    <citation type="journal article" date="1999" name="Mol. Cell">
        <title>A molecular mechanism for the phosphorylation-dependent regulation of heterotrimeric G-proteins by phosducin. Structural analysis of phosducin and its phosphorylation-regulated interaction with transducin beta-gamma.</title>
        <authorList>
            <person name="Gaudet R."/>
            <person name="Savage J.R."/>
            <person name="McLaughlin J.N."/>
            <person name="Willardson B.M."/>
            <person name="Sigler P.B."/>
        </authorList>
    </citation>
    <scope>X-RAY CRYSTALLOGRAPHY (3.0 ANGSTROMS) OF COMPLEX WITH G-BETA AND G-GAMMA</scope>
</reference>
<name>PHOS_RAT</name>
<dbReference type="EMBL" id="M33528">
    <property type="protein sequence ID" value="AAA40604.1"/>
    <property type="molecule type" value="mRNA"/>
</dbReference>
<dbReference type="EMBL" id="M33530">
    <property type="protein sequence ID" value="AAA40603.1"/>
    <property type="molecule type" value="mRNA"/>
</dbReference>
<dbReference type="EMBL" id="M60738">
    <property type="protein sequence ID" value="AAA41841.1"/>
    <property type="molecule type" value="mRNA"/>
</dbReference>
<dbReference type="PIR" id="A39903">
    <property type="entry name" value="A39903"/>
</dbReference>
<dbReference type="PIR" id="JH0216">
    <property type="entry name" value="JH0216"/>
</dbReference>
<dbReference type="RefSeq" id="NP_037004.2">
    <property type="nucleotide sequence ID" value="NM_012872.2"/>
</dbReference>
<dbReference type="PDB" id="1B9X">
    <property type="method" value="X-ray"/>
    <property type="resolution" value="3.00 A"/>
    <property type="chains" value="C=1-246"/>
</dbReference>
<dbReference type="PDB" id="1B9Y">
    <property type="method" value="X-ray"/>
    <property type="resolution" value="3.00 A"/>
    <property type="chains" value="C=1-246"/>
</dbReference>
<dbReference type="PDB" id="2TRC">
    <property type="method" value="X-ray"/>
    <property type="resolution" value="2.40 A"/>
    <property type="chains" value="P=14-230"/>
</dbReference>
<dbReference type="PDBsum" id="1B9X"/>
<dbReference type="PDBsum" id="1B9Y"/>
<dbReference type="PDBsum" id="2TRC"/>
<dbReference type="SMR" id="P20942"/>
<dbReference type="BioGRID" id="247382">
    <property type="interactions" value="1"/>
</dbReference>
<dbReference type="DIP" id="DIP-41816N"/>
<dbReference type="FunCoup" id="P20942">
    <property type="interactions" value="11"/>
</dbReference>
<dbReference type="IntAct" id="P20942">
    <property type="interactions" value="1"/>
</dbReference>
<dbReference type="MINT" id="P20942"/>
<dbReference type="STRING" id="10116.ENSRNOP00000003405"/>
<dbReference type="iPTMnet" id="P20942"/>
<dbReference type="PhosphoSitePlus" id="P20942"/>
<dbReference type="PaxDb" id="10116-ENSRNOP00000003405"/>
<dbReference type="Ensembl" id="ENSRNOT00000003405.6">
    <property type="protein sequence ID" value="ENSRNOP00000003405.3"/>
    <property type="gene ID" value="ENSRNOG00000002517.6"/>
</dbReference>
<dbReference type="GeneID" id="25343"/>
<dbReference type="KEGG" id="rno:25343"/>
<dbReference type="UCSC" id="RGD:3277">
    <property type="organism name" value="rat"/>
</dbReference>
<dbReference type="AGR" id="RGD:3277"/>
<dbReference type="CTD" id="5132"/>
<dbReference type="RGD" id="3277">
    <property type="gene designation" value="Pdc"/>
</dbReference>
<dbReference type="eggNOG" id="KOG3171">
    <property type="taxonomic scope" value="Eukaryota"/>
</dbReference>
<dbReference type="GeneTree" id="ENSGT00940000156236"/>
<dbReference type="HOGENOM" id="CLU_085598_1_0_1"/>
<dbReference type="InParanoid" id="P20942"/>
<dbReference type="OMA" id="PKYGYLC"/>
<dbReference type="PhylomeDB" id="P20942"/>
<dbReference type="TreeFam" id="TF315179"/>
<dbReference type="EvolutionaryTrace" id="P20942"/>
<dbReference type="PRO" id="PR:P20942"/>
<dbReference type="Proteomes" id="UP000002494">
    <property type="component" value="Chromosome 13"/>
</dbReference>
<dbReference type="Bgee" id="ENSRNOG00000002517">
    <property type="expression patterns" value="Expressed in cerebellum and 2 other cell types or tissues"/>
</dbReference>
<dbReference type="GO" id="GO:0005829">
    <property type="term" value="C:cytosol"/>
    <property type="evidence" value="ECO:0007669"/>
    <property type="project" value="UniProtKB-SubCell"/>
</dbReference>
<dbReference type="GO" id="GO:0005634">
    <property type="term" value="C:nucleus"/>
    <property type="evidence" value="ECO:0007669"/>
    <property type="project" value="UniProtKB-SubCell"/>
</dbReference>
<dbReference type="GO" id="GO:0001917">
    <property type="term" value="C:photoreceptor inner segment"/>
    <property type="evidence" value="ECO:0007669"/>
    <property type="project" value="UniProtKB-SubCell"/>
</dbReference>
<dbReference type="GO" id="GO:0001750">
    <property type="term" value="C:photoreceptor outer segment"/>
    <property type="evidence" value="ECO:0000266"/>
    <property type="project" value="RGD"/>
</dbReference>
<dbReference type="GO" id="GO:0008277">
    <property type="term" value="P:regulation of G protein-coupled receptor signaling pathway"/>
    <property type="evidence" value="ECO:0007669"/>
    <property type="project" value="InterPro"/>
</dbReference>
<dbReference type="GO" id="GO:0007601">
    <property type="term" value="P:visual perception"/>
    <property type="evidence" value="ECO:0007669"/>
    <property type="project" value="UniProtKB-KW"/>
</dbReference>
<dbReference type="CDD" id="cd02987">
    <property type="entry name" value="Phd_like_Phd"/>
    <property type="match status" value="1"/>
</dbReference>
<dbReference type="FunFam" id="3.40.30.10:FF:000072">
    <property type="entry name" value="Phosducin like"/>
    <property type="match status" value="1"/>
</dbReference>
<dbReference type="FunFam" id="1.10.168.10:FF:000002">
    <property type="entry name" value="Phosducin, isoform CRA_a"/>
    <property type="match status" value="1"/>
</dbReference>
<dbReference type="Gene3D" id="3.40.30.10">
    <property type="entry name" value="Glutaredoxin"/>
    <property type="match status" value="1"/>
</dbReference>
<dbReference type="Gene3D" id="1.10.168.10">
    <property type="entry name" value="Phosducin, domain 2"/>
    <property type="match status" value="2"/>
</dbReference>
<dbReference type="InterPro" id="IPR001200">
    <property type="entry name" value="Phosducin"/>
</dbReference>
<dbReference type="InterPro" id="IPR051499">
    <property type="entry name" value="Phosducin-like_reg"/>
</dbReference>
<dbReference type="InterPro" id="IPR023196">
    <property type="entry name" value="Phosducin_N_dom_sf"/>
</dbReference>
<dbReference type="InterPro" id="IPR024253">
    <property type="entry name" value="Phosducin_thioredoxin-like_dom"/>
</dbReference>
<dbReference type="InterPro" id="IPR036249">
    <property type="entry name" value="Thioredoxin-like_sf"/>
</dbReference>
<dbReference type="PANTHER" id="PTHR46052:SF3">
    <property type="entry name" value="PHOSDUCIN"/>
    <property type="match status" value="1"/>
</dbReference>
<dbReference type="PANTHER" id="PTHR46052">
    <property type="entry name" value="PHOSDUCIN-LIKE PROTEIN"/>
    <property type="match status" value="1"/>
</dbReference>
<dbReference type="Pfam" id="PF02114">
    <property type="entry name" value="Phosducin"/>
    <property type="match status" value="1"/>
</dbReference>
<dbReference type="PRINTS" id="PR00677">
    <property type="entry name" value="PHOSDUCIN"/>
</dbReference>
<dbReference type="SUPFAM" id="SSF52833">
    <property type="entry name" value="Thioredoxin-like"/>
    <property type="match status" value="1"/>
</dbReference>
<proteinExistence type="evidence at protein level"/>
<accession>P20942</accession>
<accession>Q63420</accession>
<feature type="chain" id="PRO_0000163754" description="Phosducin">
    <location>
        <begin position="1"/>
        <end position="246"/>
    </location>
</feature>
<feature type="domain" description="Phosducin" evidence="4">
    <location>
        <begin position="1"/>
        <end position="246"/>
    </location>
</feature>
<feature type="region of interest" description="Disordered" evidence="5">
    <location>
        <begin position="1"/>
        <end position="70"/>
    </location>
</feature>
<feature type="region of interest" description="Thioredoxin fold" evidence="1">
    <location>
        <begin position="111"/>
        <end position="246"/>
    </location>
</feature>
<feature type="compositionally biased region" description="Acidic residues" evidence="5">
    <location>
        <begin position="1"/>
        <end position="14"/>
    </location>
</feature>
<feature type="compositionally biased region" description="Basic and acidic residues" evidence="5">
    <location>
        <begin position="58"/>
        <end position="69"/>
    </location>
</feature>
<feature type="modified residue" description="Phosphoserine; by PKA" evidence="2">
    <location>
        <position position="73"/>
    </location>
</feature>
<feature type="sequence variant">
    <original>V</original>
    <variation>I</variation>
    <location>
        <position position="191"/>
    </location>
</feature>
<feature type="sequence conflict" description="In Ref. 2; AAA41841." evidence="6" ref="2">
    <original>G</original>
    <variation>S</variation>
    <location>
        <position position="39"/>
    </location>
</feature>
<feature type="sequence conflict" description="In Ref. 2; AAA41841." evidence="6" ref="2">
    <original>G</original>
    <variation>V</variation>
    <location>
        <position position="88"/>
    </location>
</feature>
<feature type="sequence conflict" description="In Ref. 2; AAA41841." evidence="6" ref="2">
    <original>T</original>
    <variation>S</variation>
    <location>
        <position position="119"/>
    </location>
</feature>
<feature type="sequence conflict" description="In Ref. 2; AAA41841." evidence="6" ref="2">
    <original>D</original>
    <variation>E</variation>
    <location>
        <position position="211"/>
    </location>
</feature>
<feature type="helix" evidence="8">
    <location>
        <begin position="21"/>
        <end position="36"/>
    </location>
</feature>
<feature type="strand" evidence="8">
    <location>
        <begin position="40"/>
        <end position="42"/>
    </location>
</feature>
<feature type="strand" evidence="8">
    <location>
        <begin position="56"/>
        <end position="59"/>
    </location>
</feature>
<feature type="helix" evidence="8">
    <location>
        <begin position="62"/>
        <end position="64"/>
    </location>
</feature>
<feature type="helix" evidence="8">
    <location>
        <begin position="74"/>
        <end position="82"/>
    </location>
</feature>
<feature type="helix" evidence="8">
    <location>
        <begin position="87"/>
        <end position="105"/>
    </location>
</feature>
<feature type="strand" evidence="8">
    <location>
        <begin position="113"/>
        <end position="116"/>
    </location>
</feature>
<feature type="helix" evidence="8">
    <location>
        <begin position="120"/>
        <end position="129"/>
    </location>
</feature>
<feature type="strand" evidence="8">
    <location>
        <begin position="135"/>
        <end position="141"/>
    </location>
</feature>
<feature type="helix" evidence="8">
    <location>
        <begin position="148"/>
        <end position="159"/>
    </location>
</feature>
<feature type="strand" evidence="8">
    <location>
        <begin position="165"/>
        <end position="171"/>
    </location>
</feature>
<feature type="helix" evidence="8">
    <location>
        <begin position="172"/>
        <end position="175"/>
    </location>
</feature>
<feature type="turn" evidence="7">
    <location>
        <begin position="178"/>
        <end position="180"/>
    </location>
</feature>
<feature type="helix" evidence="8">
    <location>
        <begin position="183"/>
        <end position="185"/>
    </location>
</feature>
<feature type="strand" evidence="8">
    <location>
        <begin position="187"/>
        <end position="193"/>
    </location>
</feature>
<feature type="strand" evidence="8">
    <location>
        <begin position="196"/>
        <end position="201"/>
    </location>
</feature>
<feature type="helix" evidence="8">
    <location>
        <begin position="204"/>
        <end position="207"/>
    </location>
</feature>
<feature type="helix" evidence="8">
    <location>
        <begin position="214"/>
        <end position="222"/>
    </location>
</feature>
<feature type="turn" evidence="8">
    <location>
        <begin position="223"/>
        <end position="225"/>
    </location>
</feature>
<protein>
    <recommendedName>
        <fullName>Phosducin</fullName>
        <shortName>PHD</shortName>
    </recommendedName>
    <alternativeName>
        <fullName>33 kDa phototransducing protein</fullName>
    </alternativeName>
    <alternativeName>
        <fullName>Protein MEKA</fullName>
    </alternativeName>
    <alternativeName>
        <fullName>Rod photoreceptor 1</fullName>
        <shortName>RPR-1</shortName>
    </alternativeName>
</protein>
<keyword id="KW-0002">3D-structure</keyword>
<keyword id="KW-0966">Cell projection</keyword>
<keyword id="KW-0969">Cilium</keyword>
<keyword id="KW-0963">Cytoplasm</keyword>
<keyword id="KW-0539">Nucleus</keyword>
<keyword id="KW-0597">Phosphoprotein</keyword>
<keyword id="KW-1185">Reference proteome</keyword>
<keyword id="KW-0716">Sensory transduction</keyword>
<keyword id="KW-0844">Vision</keyword>
<gene>
    <name type="primary">Pdc</name>
    <name type="synonym">Rpr1</name>
</gene>
<evidence type="ECO:0000250" key="1"/>
<evidence type="ECO:0000250" key="2">
    <source>
        <dbReference type="UniProtKB" id="P19632"/>
    </source>
</evidence>
<evidence type="ECO:0000250" key="3">
    <source>
        <dbReference type="UniProtKB" id="P20941"/>
    </source>
</evidence>
<evidence type="ECO:0000255" key="4"/>
<evidence type="ECO:0000256" key="5">
    <source>
        <dbReference type="SAM" id="MobiDB-lite"/>
    </source>
</evidence>
<evidence type="ECO:0000305" key="6"/>
<evidence type="ECO:0007829" key="7">
    <source>
        <dbReference type="PDB" id="1B9X"/>
    </source>
</evidence>
<evidence type="ECO:0007829" key="8">
    <source>
        <dbReference type="PDB" id="2TRC"/>
    </source>
</evidence>
<sequence>MEEAASQSLEEDFEGQATHTGPKGVINDWRKFKLESEDGDSIPPSKKEILRQMSSPQSRDDKDSKERMSRKMSIQEYELIHQDKEDEGCLRKYRRQCMQDMHQKLSFGPRYGFVYELETGEQFLETIEKEQKVTTIVVNIYEDGVRGCDALNSSLECLAAEYPMVKFCKIRASNTGAGDRFSSDVLPTLLVYKGGELISNFISVAEQFAEDFFAADVESFLNEYGLLPEREIHDLGQTNTEDEDIE</sequence>
<organism>
    <name type="scientific">Rattus norvegicus</name>
    <name type="common">Rat</name>
    <dbReference type="NCBI Taxonomy" id="10116"/>
    <lineage>
        <taxon>Eukaryota</taxon>
        <taxon>Metazoa</taxon>
        <taxon>Chordata</taxon>
        <taxon>Craniata</taxon>
        <taxon>Vertebrata</taxon>
        <taxon>Euteleostomi</taxon>
        <taxon>Mammalia</taxon>
        <taxon>Eutheria</taxon>
        <taxon>Euarchontoglires</taxon>
        <taxon>Glires</taxon>
        <taxon>Rodentia</taxon>
        <taxon>Myomorpha</taxon>
        <taxon>Muroidea</taxon>
        <taxon>Muridae</taxon>
        <taxon>Murinae</taxon>
        <taxon>Rattus</taxon>
    </lineage>
</organism>